<protein>
    <recommendedName>
        <fullName evidence="1">Probable GTP-binding protein EngB</fullName>
    </recommendedName>
</protein>
<keyword id="KW-0131">Cell cycle</keyword>
<keyword id="KW-0132">Cell division</keyword>
<keyword id="KW-0342">GTP-binding</keyword>
<keyword id="KW-0460">Magnesium</keyword>
<keyword id="KW-0479">Metal-binding</keyword>
<keyword id="KW-0547">Nucleotide-binding</keyword>
<keyword id="KW-0717">Septation</keyword>
<sequence length="225" mass="24219">MTTGADAATERQDKPGGKLFIRPWIFIRGVPAMKFLPPEGPPEVAFAGRSNVGKSSLINGLVGRKGLARTSNTPGRTQELNYFVPEGYSGEAGDLPPMALVDMPGYGFAKAPKAQVDAWTKLVFDYLRGRVTLKRVYLLIDARHGIKKIDEEVMDLLDSAAVSYQIVLTKADKIKSPAVTKLVAETGQKIVKRPAAFPEVIATSSEKGEGLEELRAAIVHAVTAG</sequence>
<reference key="1">
    <citation type="submission" date="2006-06" db="EMBL/GenBank/DDBJ databases">
        <title>Complete sequence of chromosome of Mesorhizobium sp. BNC1.</title>
        <authorList>
            <consortium name="US DOE Joint Genome Institute"/>
            <person name="Copeland A."/>
            <person name="Lucas S."/>
            <person name="Lapidus A."/>
            <person name="Barry K."/>
            <person name="Detter J.C."/>
            <person name="Glavina del Rio T."/>
            <person name="Hammon N."/>
            <person name="Israni S."/>
            <person name="Dalin E."/>
            <person name="Tice H."/>
            <person name="Pitluck S."/>
            <person name="Chertkov O."/>
            <person name="Brettin T."/>
            <person name="Bruce D."/>
            <person name="Han C."/>
            <person name="Tapia R."/>
            <person name="Gilna P."/>
            <person name="Schmutz J."/>
            <person name="Larimer F."/>
            <person name="Land M."/>
            <person name="Hauser L."/>
            <person name="Kyrpides N."/>
            <person name="Mikhailova N."/>
            <person name="Richardson P."/>
        </authorList>
    </citation>
    <scope>NUCLEOTIDE SEQUENCE [LARGE SCALE GENOMIC DNA]</scope>
    <source>
        <strain>BNC1</strain>
    </source>
</reference>
<organism>
    <name type="scientific">Chelativorans sp. (strain BNC1)</name>
    <dbReference type="NCBI Taxonomy" id="266779"/>
    <lineage>
        <taxon>Bacteria</taxon>
        <taxon>Pseudomonadati</taxon>
        <taxon>Pseudomonadota</taxon>
        <taxon>Alphaproteobacteria</taxon>
        <taxon>Hyphomicrobiales</taxon>
        <taxon>Phyllobacteriaceae</taxon>
        <taxon>Chelativorans</taxon>
    </lineage>
</organism>
<evidence type="ECO:0000255" key="1">
    <source>
        <dbReference type="HAMAP-Rule" id="MF_00321"/>
    </source>
</evidence>
<proteinExistence type="inferred from homology"/>
<feature type="chain" id="PRO_0000266890" description="Probable GTP-binding protein EngB">
    <location>
        <begin position="1"/>
        <end position="225"/>
    </location>
</feature>
<feature type="domain" description="EngB-type G" evidence="1">
    <location>
        <begin position="40"/>
        <end position="224"/>
    </location>
</feature>
<feature type="binding site" evidence="1">
    <location>
        <begin position="48"/>
        <end position="55"/>
    </location>
    <ligand>
        <name>GTP</name>
        <dbReference type="ChEBI" id="CHEBI:37565"/>
    </ligand>
</feature>
<feature type="binding site" evidence="1">
    <location>
        <position position="55"/>
    </location>
    <ligand>
        <name>Mg(2+)</name>
        <dbReference type="ChEBI" id="CHEBI:18420"/>
    </ligand>
</feature>
<feature type="binding site" evidence="1">
    <location>
        <begin position="75"/>
        <end position="79"/>
    </location>
    <ligand>
        <name>GTP</name>
        <dbReference type="ChEBI" id="CHEBI:37565"/>
    </ligand>
</feature>
<feature type="binding site" evidence="1">
    <location>
        <position position="77"/>
    </location>
    <ligand>
        <name>Mg(2+)</name>
        <dbReference type="ChEBI" id="CHEBI:18420"/>
    </ligand>
</feature>
<feature type="binding site" evidence="1">
    <location>
        <begin position="102"/>
        <end position="105"/>
    </location>
    <ligand>
        <name>GTP</name>
        <dbReference type="ChEBI" id="CHEBI:37565"/>
    </ligand>
</feature>
<feature type="binding site" evidence="1">
    <location>
        <begin position="169"/>
        <end position="172"/>
    </location>
    <ligand>
        <name>GTP</name>
        <dbReference type="ChEBI" id="CHEBI:37565"/>
    </ligand>
</feature>
<feature type="binding site" evidence="1">
    <location>
        <begin position="203"/>
        <end position="205"/>
    </location>
    <ligand>
        <name>GTP</name>
        <dbReference type="ChEBI" id="CHEBI:37565"/>
    </ligand>
</feature>
<gene>
    <name evidence="1" type="primary">engB</name>
    <name type="ordered locus">Meso_0378</name>
</gene>
<accession>Q11LE3</accession>
<name>ENGB_CHESB</name>
<dbReference type="EMBL" id="CP000390">
    <property type="protein sequence ID" value="ABG61782.1"/>
    <property type="molecule type" value="Genomic_DNA"/>
</dbReference>
<dbReference type="SMR" id="Q11LE3"/>
<dbReference type="STRING" id="266779.Meso_0378"/>
<dbReference type="KEGG" id="mes:Meso_0378"/>
<dbReference type="eggNOG" id="COG0218">
    <property type="taxonomic scope" value="Bacteria"/>
</dbReference>
<dbReference type="HOGENOM" id="CLU_033732_2_0_5"/>
<dbReference type="OrthoDB" id="9804921at2"/>
<dbReference type="GO" id="GO:0005829">
    <property type="term" value="C:cytosol"/>
    <property type="evidence" value="ECO:0007669"/>
    <property type="project" value="TreeGrafter"/>
</dbReference>
<dbReference type="GO" id="GO:0005525">
    <property type="term" value="F:GTP binding"/>
    <property type="evidence" value="ECO:0007669"/>
    <property type="project" value="UniProtKB-UniRule"/>
</dbReference>
<dbReference type="GO" id="GO:0046872">
    <property type="term" value="F:metal ion binding"/>
    <property type="evidence" value="ECO:0007669"/>
    <property type="project" value="UniProtKB-KW"/>
</dbReference>
<dbReference type="GO" id="GO:0000917">
    <property type="term" value="P:division septum assembly"/>
    <property type="evidence" value="ECO:0007669"/>
    <property type="project" value="UniProtKB-KW"/>
</dbReference>
<dbReference type="CDD" id="cd01876">
    <property type="entry name" value="YihA_EngB"/>
    <property type="match status" value="1"/>
</dbReference>
<dbReference type="Gene3D" id="3.40.50.300">
    <property type="entry name" value="P-loop containing nucleotide triphosphate hydrolases"/>
    <property type="match status" value="1"/>
</dbReference>
<dbReference type="HAMAP" id="MF_00321">
    <property type="entry name" value="GTPase_EngB"/>
    <property type="match status" value="1"/>
</dbReference>
<dbReference type="InterPro" id="IPR030393">
    <property type="entry name" value="G_ENGB_dom"/>
</dbReference>
<dbReference type="InterPro" id="IPR006073">
    <property type="entry name" value="GTP-bd"/>
</dbReference>
<dbReference type="InterPro" id="IPR019987">
    <property type="entry name" value="GTP-bd_ribosome_bio_YsxC"/>
</dbReference>
<dbReference type="InterPro" id="IPR027417">
    <property type="entry name" value="P-loop_NTPase"/>
</dbReference>
<dbReference type="NCBIfam" id="TIGR03598">
    <property type="entry name" value="GTPase_YsxC"/>
    <property type="match status" value="1"/>
</dbReference>
<dbReference type="PANTHER" id="PTHR11649:SF13">
    <property type="entry name" value="ENGB-TYPE G DOMAIN-CONTAINING PROTEIN"/>
    <property type="match status" value="1"/>
</dbReference>
<dbReference type="PANTHER" id="PTHR11649">
    <property type="entry name" value="MSS1/TRME-RELATED GTP-BINDING PROTEIN"/>
    <property type="match status" value="1"/>
</dbReference>
<dbReference type="Pfam" id="PF01926">
    <property type="entry name" value="MMR_HSR1"/>
    <property type="match status" value="1"/>
</dbReference>
<dbReference type="SUPFAM" id="SSF52540">
    <property type="entry name" value="P-loop containing nucleoside triphosphate hydrolases"/>
    <property type="match status" value="1"/>
</dbReference>
<dbReference type="PROSITE" id="PS51706">
    <property type="entry name" value="G_ENGB"/>
    <property type="match status" value="1"/>
</dbReference>
<comment type="function">
    <text evidence="1">Necessary for normal cell division and for the maintenance of normal septation.</text>
</comment>
<comment type="cofactor">
    <cofactor evidence="1">
        <name>Mg(2+)</name>
        <dbReference type="ChEBI" id="CHEBI:18420"/>
    </cofactor>
</comment>
<comment type="similarity">
    <text evidence="1">Belongs to the TRAFAC class TrmE-Era-EngA-EngB-Septin-like GTPase superfamily. EngB GTPase family.</text>
</comment>